<sequence length="1172" mass="132138">MYEYYSTGKIRSLPQQVDSNGINSKPMNSSPSTPIPNNNNNNNNNNNNNNNNNNNNNNNNNNNRNKSQQSFYLNNNNRNCGFSSPTKPQYNNNNNNNNNNNSNYNHSYGGGGGGTTSQFQQHHLHPVNRKPPKFKISYSVKNTLNNTIIPDRHCFGVNSLAYNHRKSILYSAGRDSTIKSYQIGGGDNDNDINEKNEYGFKFKKSFNDHTDWVNDLFFNDSNILVSCSSDSTIKIWNTDSERCVNSLKFHDDYVKVLAYAPKANYFASSGLDSHIKIWDLSICSISQSFSIDNNNNNNHNSSSNYNQFGDTSILKHITNNSQPTNKINNCNINVVNGNINISTNNNNNNSSSSNNNNNNNNNNNNGQTNTHENTAETSDSEGSKDDNQLSSVNKNGIRSNLSNNNFRNIDNIDEYTPPSSVLNHTPKILSSNGRNVNNRENNNNNNNNNNNNNNNNNNNNNNNNNNNNNNNNNINNNNHENNGNVDVDDEDDDDDDDDDDDDDCNKNKKKYDDNNNNNNYNNNNNKKNNSNDNNNDNNNLNKKFSPMFGSGSYLVGKSGGEGISIYSLAIAQDASFVVSGSTERAIRGWDVRSGQKIFKLKGHTDNIRSILLNDNSTRCLSASSDGTVRLWDIGEQRCIQVFDDLHTDSVWTLATNDSFSHFFSGGRDGMIFLTDLKTHQSRLVSRENEPILKILNNQDDQSIWVSTTSSTIKNYGLSNFYDKNQSIDNNTTNCGSISSEILYNNNNNNNNNNNNNNNNNNNNNNNNNNNREKLSTINEDSNGLQVDEPKIKIQGRAGIIKNQVLNNRRQVLTKDNDNNVQLWDITKGKEIESFGKVDFDKKLEEFNEVISIPKWFQVDCKTGSLFISLESPLCFSADAYQTNLGLTPTEDSLINIGESILYSLFSKWIMGYNLIQLNATTNKDNELNHSNDSVNSSLSSNTSGDNNNNNYNNYNNYNNNNNNGLQKSSSSSSIVSTNSTTPNSGRPLIEIMAKKSIFHLPSNTDVVISDETSGLVLYRSRIEEFTGREQIKIIDWLYNCLETSAIPIKRDNQKISFSVEVNEKIPQNLNAPYYIQVRKICDHVLNNFFINPNNNNNNNSSVNNDLPKGEEFFEICLQNKILLPHYTLGTVKSFFWKQNSTIPLTARVKAQYINETELVKYLKQLSLNHNKK</sequence>
<reference key="1">
    <citation type="journal article" date="2002" name="Nature">
        <title>Sequence and analysis of chromosome 2 of Dictyostelium discoideum.</title>
        <authorList>
            <person name="Gloeckner G."/>
            <person name="Eichinger L."/>
            <person name="Szafranski K."/>
            <person name="Pachebat J.A."/>
            <person name="Bankier A.T."/>
            <person name="Dear P.H."/>
            <person name="Lehmann R."/>
            <person name="Baumgart C."/>
            <person name="Parra G."/>
            <person name="Abril J.F."/>
            <person name="Guigo R."/>
            <person name="Kumpf K."/>
            <person name="Tunggal B."/>
            <person name="Cox E.C."/>
            <person name="Quail M.A."/>
            <person name="Platzer M."/>
            <person name="Rosenthal A."/>
            <person name="Noegel A.A."/>
        </authorList>
    </citation>
    <scope>NUCLEOTIDE SEQUENCE [LARGE SCALE GENOMIC DNA]</scope>
    <source>
        <strain>AX4</strain>
    </source>
</reference>
<reference key="2">
    <citation type="journal article" date="2005" name="Nature">
        <title>The genome of the social amoeba Dictyostelium discoideum.</title>
        <authorList>
            <person name="Eichinger L."/>
            <person name="Pachebat J.A."/>
            <person name="Gloeckner G."/>
            <person name="Rajandream M.A."/>
            <person name="Sucgang R."/>
            <person name="Berriman M."/>
            <person name="Song J."/>
            <person name="Olsen R."/>
            <person name="Szafranski K."/>
            <person name="Xu Q."/>
            <person name="Tunggal B."/>
            <person name="Kummerfeld S."/>
            <person name="Madera M."/>
            <person name="Konfortov B.A."/>
            <person name="Rivero F."/>
            <person name="Bankier A.T."/>
            <person name="Lehmann R."/>
            <person name="Hamlin N."/>
            <person name="Davies R."/>
            <person name="Gaudet P."/>
            <person name="Fey P."/>
            <person name="Pilcher K."/>
            <person name="Chen G."/>
            <person name="Saunders D."/>
            <person name="Sodergren E.J."/>
            <person name="Davis P."/>
            <person name="Kerhornou A."/>
            <person name="Nie X."/>
            <person name="Hall N."/>
            <person name="Anjard C."/>
            <person name="Hemphill L."/>
            <person name="Bason N."/>
            <person name="Farbrother P."/>
            <person name="Desany B."/>
            <person name="Just E."/>
            <person name="Morio T."/>
            <person name="Rost R."/>
            <person name="Churcher C.M."/>
            <person name="Cooper J."/>
            <person name="Haydock S."/>
            <person name="van Driessche N."/>
            <person name="Cronin A."/>
            <person name="Goodhead I."/>
            <person name="Muzny D.M."/>
            <person name="Mourier T."/>
            <person name="Pain A."/>
            <person name="Lu M."/>
            <person name="Harper D."/>
            <person name="Lindsay R."/>
            <person name="Hauser H."/>
            <person name="James K.D."/>
            <person name="Quiles M."/>
            <person name="Madan Babu M."/>
            <person name="Saito T."/>
            <person name="Buchrieser C."/>
            <person name="Wardroper A."/>
            <person name="Felder M."/>
            <person name="Thangavelu M."/>
            <person name="Johnson D."/>
            <person name="Knights A."/>
            <person name="Loulseged H."/>
            <person name="Mungall K.L."/>
            <person name="Oliver K."/>
            <person name="Price C."/>
            <person name="Quail M.A."/>
            <person name="Urushihara H."/>
            <person name="Hernandez J."/>
            <person name="Rabbinowitsch E."/>
            <person name="Steffen D."/>
            <person name="Sanders M."/>
            <person name="Ma J."/>
            <person name="Kohara Y."/>
            <person name="Sharp S."/>
            <person name="Simmonds M.N."/>
            <person name="Spiegler S."/>
            <person name="Tivey A."/>
            <person name="Sugano S."/>
            <person name="White B."/>
            <person name="Walker D."/>
            <person name="Woodward J.R."/>
            <person name="Winckler T."/>
            <person name="Tanaka Y."/>
            <person name="Shaulsky G."/>
            <person name="Schleicher M."/>
            <person name="Weinstock G.M."/>
            <person name="Rosenthal A."/>
            <person name="Cox E.C."/>
            <person name="Chisholm R.L."/>
            <person name="Gibbs R.A."/>
            <person name="Loomis W.F."/>
            <person name="Platzer M."/>
            <person name="Kay R.R."/>
            <person name="Williams J.G."/>
            <person name="Dear P.H."/>
            <person name="Noegel A.A."/>
            <person name="Barrell B.G."/>
            <person name="Kuspa A."/>
        </authorList>
    </citation>
    <scope>NUCLEOTIDE SEQUENCE [LARGE SCALE GENOMIC DNA]</scope>
    <source>
        <strain>AX4</strain>
    </source>
</reference>
<dbReference type="EMBL" id="AAFI02000020">
    <property type="protein sequence ID" value="EAL68729.1"/>
    <property type="molecule type" value="Genomic_DNA"/>
</dbReference>
<dbReference type="RefSeq" id="XP_642597.1">
    <property type="nucleotide sequence ID" value="XM_637505.1"/>
</dbReference>
<dbReference type="SMR" id="Q54ZP5"/>
<dbReference type="FunCoup" id="Q54ZP5">
    <property type="interactions" value="348"/>
</dbReference>
<dbReference type="STRING" id="44689.Q54ZP5"/>
<dbReference type="PaxDb" id="44689-DDB0237514"/>
<dbReference type="EnsemblProtists" id="EAL68729">
    <property type="protein sequence ID" value="EAL68729"/>
    <property type="gene ID" value="DDB_G0277533"/>
</dbReference>
<dbReference type="GeneID" id="8621014"/>
<dbReference type="KEGG" id="ddi:DDB_G0277533"/>
<dbReference type="dictyBase" id="DDB_G0277533"/>
<dbReference type="VEuPathDB" id="AmoebaDB:DDB_G0277533"/>
<dbReference type="eggNOG" id="KOG0308">
    <property type="taxonomic scope" value="Eukaryota"/>
</dbReference>
<dbReference type="HOGENOM" id="CLU_274005_0_0_1"/>
<dbReference type="InParanoid" id="Q54ZP5"/>
<dbReference type="OMA" id="DANDRKH"/>
<dbReference type="Reactome" id="R-DDI-5689880">
    <property type="pathway name" value="Ub-specific processing proteases"/>
</dbReference>
<dbReference type="PRO" id="PR:Q54ZP5"/>
<dbReference type="Proteomes" id="UP000002195">
    <property type="component" value="Chromosome 2"/>
</dbReference>
<dbReference type="GO" id="GO:0043130">
    <property type="term" value="F:ubiquitin binding"/>
    <property type="evidence" value="ECO:0000318"/>
    <property type="project" value="GO_Central"/>
</dbReference>
<dbReference type="GO" id="GO:0000724">
    <property type="term" value="P:double-strand break repair via homologous recombination"/>
    <property type="evidence" value="ECO:0000318"/>
    <property type="project" value="GO_Central"/>
</dbReference>
<dbReference type="FunFam" id="2.130.10.10:FF:003650">
    <property type="entry name" value="WD repeat-containing protein 48 homolog"/>
    <property type="match status" value="1"/>
</dbReference>
<dbReference type="Gene3D" id="2.130.10.10">
    <property type="entry name" value="YVTN repeat-like/Quinoprotein amine dehydrogenase"/>
    <property type="match status" value="2"/>
</dbReference>
<dbReference type="InterPro" id="IPR020472">
    <property type="entry name" value="G-protein_beta_WD-40_rep"/>
</dbReference>
<dbReference type="InterPro" id="IPR015943">
    <property type="entry name" value="WD40/YVTN_repeat-like_dom_sf"/>
</dbReference>
<dbReference type="InterPro" id="IPR019775">
    <property type="entry name" value="WD40_repeat_CS"/>
</dbReference>
<dbReference type="InterPro" id="IPR036322">
    <property type="entry name" value="WD40_repeat_dom_sf"/>
</dbReference>
<dbReference type="InterPro" id="IPR001680">
    <property type="entry name" value="WD40_rpt"/>
</dbReference>
<dbReference type="InterPro" id="IPR051246">
    <property type="entry name" value="WDR48"/>
</dbReference>
<dbReference type="InterPro" id="IPR021772">
    <property type="entry name" value="WDR48/Bun107"/>
</dbReference>
<dbReference type="PANTHER" id="PTHR19862">
    <property type="entry name" value="WD REPEAT-CONTAINING PROTEIN 48"/>
    <property type="match status" value="1"/>
</dbReference>
<dbReference type="PANTHER" id="PTHR19862:SF14">
    <property type="entry name" value="WD REPEAT-CONTAINING PROTEIN 48"/>
    <property type="match status" value="1"/>
</dbReference>
<dbReference type="Pfam" id="PF11816">
    <property type="entry name" value="DUF3337"/>
    <property type="match status" value="1"/>
</dbReference>
<dbReference type="Pfam" id="PF00400">
    <property type="entry name" value="WD40"/>
    <property type="match status" value="5"/>
</dbReference>
<dbReference type="PRINTS" id="PR00320">
    <property type="entry name" value="GPROTEINBRPT"/>
</dbReference>
<dbReference type="SMART" id="SM00320">
    <property type="entry name" value="WD40"/>
    <property type="match status" value="7"/>
</dbReference>
<dbReference type="SUPFAM" id="SSF50978">
    <property type="entry name" value="WD40 repeat-like"/>
    <property type="match status" value="1"/>
</dbReference>
<dbReference type="PROSITE" id="PS00678">
    <property type="entry name" value="WD_REPEATS_1"/>
    <property type="match status" value="2"/>
</dbReference>
<dbReference type="PROSITE" id="PS50082">
    <property type="entry name" value="WD_REPEATS_2"/>
    <property type="match status" value="5"/>
</dbReference>
<dbReference type="PROSITE" id="PS50294">
    <property type="entry name" value="WD_REPEATS_REGION"/>
    <property type="match status" value="2"/>
</dbReference>
<feature type="chain" id="PRO_0000378989" description="WD repeat-containing protein 48 homolog">
    <location>
        <begin position="1"/>
        <end position="1172"/>
    </location>
</feature>
<feature type="repeat" description="WD 1">
    <location>
        <begin position="152"/>
        <end position="202"/>
    </location>
</feature>
<feature type="repeat" description="WD 2">
    <location>
        <begin position="208"/>
        <end position="246"/>
    </location>
</feature>
<feature type="repeat" description="WD 3">
    <location>
        <begin position="249"/>
        <end position="548"/>
    </location>
</feature>
<feature type="repeat" description="WD 4">
    <location>
        <begin position="560"/>
        <end position="599"/>
    </location>
</feature>
<feature type="repeat" description="WD 5">
    <location>
        <begin position="602"/>
        <end position="641"/>
    </location>
</feature>
<feature type="repeat" description="WD 6">
    <location>
        <begin position="645"/>
        <end position="683"/>
    </location>
</feature>
<feature type="repeat" description="WD 7">
    <location>
        <begin position="686"/>
        <end position="727"/>
    </location>
</feature>
<feature type="repeat" description="WD 8">
    <location>
        <begin position="794"/>
        <end position="833"/>
    </location>
</feature>
<feature type="region of interest" description="Disordered" evidence="1">
    <location>
        <begin position="1"/>
        <end position="115"/>
    </location>
</feature>
<feature type="region of interest" description="Disordered" evidence="1">
    <location>
        <begin position="341"/>
        <end position="544"/>
    </location>
</feature>
<feature type="region of interest" description="Disordered" evidence="1">
    <location>
        <begin position="745"/>
        <end position="775"/>
    </location>
</feature>
<feature type="region of interest" description="Disordered" evidence="1">
    <location>
        <begin position="926"/>
        <end position="986"/>
    </location>
</feature>
<feature type="compositionally biased region" description="Polar residues" evidence="1">
    <location>
        <begin position="13"/>
        <end position="36"/>
    </location>
</feature>
<feature type="compositionally biased region" description="Low complexity" evidence="1">
    <location>
        <begin position="37"/>
        <end position="63"/>
    </location>
</feature>
<feature type="compositionally biased region" description="Polar residues" evidence="1">
    <location>
        <begin position="64"/>
        <end position="89"/>
    </location>
</feature>
<feature type="compositionally biased region" description="Low complexity" evidence="1">
    <location>
        <begin position="90"/>
        <end position="107"/>
    </location>
</feature>
<feature type="compositionally biased region" description="Low complexity" evidence="1">
    <location>
        <begin position="341"/>
        <end position="365"/>
    </location>
</feature>
<feature type="compositionally biased region" description="Polar residues" evidence="1">
    <location>
        <begin position="366"/>
        <end position="377"/>
    </location>
</feature>
<feature type="compositionally biased region" description="Polar residues" evidence="1">
    <location>
        <begin position="388"/>
        <end position="408"/>
    </location>
</feature>
<feature type="compositionally biased region" description="Polar residues" evidence="1">
    <location>
        <begin position="417"/>
        <end position="434"/>
    </location>
</feature>
<feature type="compositionally biased region" description="Low complexity" evidence="1">
    <location>
        <begin position="435"/>
        <end position="485"/>
    </location>
</feature>
<feature type="compositionally biased region" description="Acidic residues" evidence="1">
    <location>
        <begin position="486"/>
        <end position="503"/>
    </location>
</feature>
<feature type="compositionally biased region" description="Basic and acidic residues" evidence="1">
    <location>
        <begin position="504"/>
        <end position="513"/>
    </location>
</feature>
<feature type="compositionally biased region" description="Low complexity" evidence="1">
    <location>
        <begin position="514"/>
        <end position="543"/>
    </location>
</feature>
<feature type="compositionally biased region" description="Low complexity" evidence="1">
    <location>
        <begin position="745"/>
        <end position="769"/>
    </location>
</feature>
<feature type="compositionally biased region" description="Low complexity" evidence="1">
    <location>
        <begin position="930"/>
        <end position="984"/>
    </location>
</feature>
<organism>
    <name type="scientific">Dictyostelium discoideum</name>
    <name type="common">Social amoeba</name>
    <dbReference type="NCBI Taxonomy" id="44689"/>
    <lineage>
        <taxon>Eukaryota</taxon>
        <taxon>Amoebozoa</taxon>
        <taxon>Evosea</taxon>
        <taxon>Eumycetozoa</taxon>
        <taxon>Dictyostelia</taxon>
        <taxon>Dictyosteliales</taxon>
        <taxon>Dictyosteliaceae</taxon>
        <taxon>Dictyostelium</taxon>
    </lineage>
</organism>
<comment type="similarity">
    <text evidence="2">Belongs to the WD repeat WDR48 family.</text>
</comment>
<proteinExistence type="inferred from homology"/>
<accession>Q54ZP5</accession>
<accession>Q76NV2</accession>
<evidence type="ECO:0000256" key="1">
    <source>
        <dbReference type="SAM" id="MobiDB-lite"/>
    </source>
</evidence>
<evidence type="ECO:0000305" key="2"/>
<gene>
    <name type="ORF">DDB_G0277533</name>
</gene>
<keyword id="KW-1185">Reference proteome</keyword>
<keyword id="KW-0677">Repeat</keyword>
<keyword id="KW-0853">WD repeat</keyword>
<protein>
    <recommendedName>
        <fullName>WD repeat-containing protein 48 homolog</fullName>
    </recommendedName>
</protein>
<name>WDR48_DICDI</name>